<proteinExistence type="inferred from homology"/>
<reference key="1">
    <citation type="journal article" date="2001" name="Proc. Natl. Acad. Sci. U.S.A.">
        <title>Complete genome sequence of Caulobacter crescentus.</title>
        <authorList>
            <person name="Nierman W.C."/>
            <person name="Feldblyum T.V."/>
            <person name="Laub M.T."/>
            <person name="Paulsen I.T."/>
            <person name="Nelson K.E."/>
            <person name="Eisen J.A."/>
            <person name="Heidelberg J.F."/>
            <person name="Alley M.R.K."/>
            <person name="Ohta N."/>
            <person name="Maddock J.R."/>
            <person name="Potocka I."/>
            <person name="Nelson W.C."/>
            <person name="Newton A."/>
            <person name="Stephens C."/>
            <person name="Phadke N.D."/>
            <person name="Ely B."/>
            <person name="DeBoy R.T."/>
            <person name="Dodson R.J."/>
            <person name="Durkin A.S."/>
            <person name="Gwinn M.L."/>
            <person name="Haft D.H."/>
            <person name="Kolonay J.F."/>
            <person name="Smit J."/>
            <person name="Craven M.B."/>
            <person name="Khouri H.M."/>
            <person name="Shetty J."/>
            <person name="Berry K.J."/>
            <person name="Utterback T.R."/>
            <person name="Tran K."/>
            <person name="Wolf A.M."/>
            <person name="Vamathevan J.J."/>
            <person name="Ermolaeva M.D."/>
            <person name="White O."/>
            <person name="Salzberg S.L."/>
            <person name="Venter J.C."/>
            <person name="Shapiro L."/>
            <person name="Fraser C.M."/>
        </authorList>
    </citation>
    <scope>NUCLEOTIDE SEQUENCE [LARGE SCALE GENOMIC DNA]</scope>
    <source>
        <strain>ATCC 19089 / CIP 103742 / CB 15</strain>
    </source>
</reference>
<feature type="chain" id="PRO_0000254239" description="ATP synthase subunit beta">
    <location>
        <begin position="1"/>
        <end position="539"/>
    </location>
</feature>
<feature type="region of interest" description="Disordered" evidence="2">
    <location>
        <begin position="1"/>
        <end position="44"/>
    </location>
</feature>
<feature type="binding site" evidence="1">
    <location>
        <begin position="212"/>
        <end position="219"/>
    </location>
    <ligand>
        <name>ATP</name>
        <dbReference type="ChEBI" id="CHEBI:30616"/>
    </ligand>
</feature>
<comment type="function">
    <text evidence="1">Produces ATP from ADP in the presence of a proton gradient across the membrane. The catalytic sites are hosted primarily by the beta subunits.</text>
</comment>
<comment type="catalytic activity">
    <reaction evidence="1">
        <text>ATP + H2O + 4 H(+)(in) = ADP + phosphate + 5 H(+)(out)</text>
        <dbReference type="Rhea" id="RHEA:57720"/>
        <dbReference type="ChEBI" id="CHEBI:15377"/>
        <dbReference type="ChEBI" id="CHEBI:15378"/>
        <dbReference type="ChEBI" id="CHEBI:30616"/>
        <dbReference type="ChEBI" id="CHEBI:43474"/>
        <dbReference type="ChEBI" id="CHEBI:456216"/>
        <dbReference type="EC" id="7.1.2.2"/>
    </reaction>
</comment>
<comment type="subunit">
    <text evidence="1">F-type ATPases have 2 components, CF(1) - the catalytic core - and CF(0) - the membrane proton channel. CF(1) has five subunits: alpha(3), beta(3), gamma(1), delta(1), epsilon(1). CF(0) has three main subunits: a(1), b(2) and c(9-12). The alpha and beta chains form an alternating ring which encloses part of the gamma chain. CF(1) is attached to CF(0) by a central stalk formed by the gamma and epsilon chains, while a peripheral stalk is formed by the delta and b chains.</text>
</comment>
<comment type="subcellular location">
    <subcellularLocation>
        <location evidence="1">Cell inner membrane</location>
        <topology evidence="1">Peripheral membrane protein</topology>
    </subcellularLocation>
</comment>
<comment type="similarity">
    <text evidence="1">Belongs to the ATPase alpha/beta chains family.</text>
</comment>
<dbReference type="EC" id="7.1.2.2" evidence="1"/>
<dbReference type="EMBL" id="AE005673">
    <property type="protein sequence ID" value="AAK25409.1"/>
    <property type="molecule type" value="Genomic_DNA"/>
</dbReference>
<dbReference type="PIR" id="E87676">
    <property type="entry name" value="E87676"/>
</dbReference>
<dbReference type="RefSeq" id="NP_422241.1">
    <property type="nucleotide sequence ID" value="NC_002696.2"/>
</dbReference>
<dbReference type="RefSeq" id="WP_010921276.1">
    <property type="nucleotide sequence ID" value="NC_002696.2"/>
</dbReference>
<dbReference type="SMR" id="Q9A2V9"/>
<dbReference type="STRING" id="190650.CC_3447"/>
<dbReference type="EnsemblBacteria" id="AAK25409">
    <property type="protein sequence ID" value="AAK25409"/>
    <property type="gene ID" value="CC_3447"/>
</dbReference>
<dbReference type="KEGG" id="ccr:CC_3447"/>
<dbReference type="PATRIC" id="fig|190650.5.peg.3457"/>
<dbReference type="eggNOG" id="COG0055">
    <property type="taxonomic scope" value="Bacteria"/>
</dbReference>
<dbReference type="HOGENOM" id="CLU_022398_0_2_5"/>
<dbReference type="BioCyc" id="CAULO:CC3447-MONOMER"/>
<dbReference type="Proteomes" id="UP000001816">
    <property type="component" value="Chromosome"/>
</dbReference>
<dbReference type="GO" id="GO:0005886">
    <property type="term" value="C:plasma membrane"/>
    <property type="evidence" value="ECO:0007669"/>
    <property type="project" value="UniProtKB-SubCell"/>
</dbReference>
<dbReference type="GO" id="GO:0045259">
    <property type="term" value="C:proton-transporting ATP synthase complex"/>
    <property type="evidence" value="ECO:0007669"/>
    <property type="project" value="UniProtKB-KW"/>
</dbReference>
<dbReference type="GO" id="GO:0005524">
    <property type="term" value="F:ATP binding"/>
    <property type="evidence" value="ECO:0007669"/>
    <property type="project" value="UniProtKB-UniRule"/>
</dbReference>
<dbReference type="GO" id="GO:0016887">
    <property type="term" value="F:ATP hydrolysis activity"/>
    <property type="evidence" value="ECO:0007669"/>
    <property type="project" value="InterPro"/>
</dbReference>
<dbReference type="GO" id="GO:0046933">
    <property type="term" value="F:proton-transporting ATP synthase activity, rotational mechanism"/>
    <property type="evidence" value="ECO:0007669"/>
    <property type="project" value="UniProtKB-UniRule"/>
</dbReference>
<dbReference type="CDD" id="cd18110">
    <property type="entry name" value="ATP-synt_F1_beta_C"/>
    <property type="match status" value="1"/>
</dbReference>
<dbReference type="CDD" id="cd18115">
    <property type="entry name" value="ATP-synt_F1_beta_N"/>
    <property type="match status" value="1"/>
</dbReference>
<dbReference type="CDD" id="cd01133">
    <property type="entry name" value="F1-ATPase_beta_CD"/>
    <property type="match status" value="1"/>
</dbReference>
<dbReference type="FunFam" id="1.10.1140.10:FF:000001">
    <property type="entry name" value="ATP synthase subunit beta"/>
    <property type="match status" value="1"/>
</dbReference>
<dbReference type="FunFam" id="3.40.50.300:FF:000026">
    <property type="entry name" value="ATP synthase subunit beta"/>
    <property type="match status" value="1"/>
</dbReference>
<dbReference type="Gene3D" id="2.40.10.170">
    <property type="match status" value="1"/>
</dbReference>
<dbReference type="Gene3D" id="1.10.1140.10">
    <property type="entry name" value="Bovine Mitochondrial F1-atpase, Atp Synthase Beta Chain, Chain D, domain 3"/>
    <property type="match status" value="1"/>
</dbReference>
<dbReference type="Gene3D" id="3.40.50.300">
    <property type="entry name" value="P-loop containing nucleotide triphosphate hydrolases"/>
    <property type="match status" value="1"/>
</dbReference>
<dbReference type="HAMAP" id="MF_01347">
    <property type="entry name" value="ATP_synth_beta_bact"/>
    <property type="match status" value="1"/>
</dbReference>
<dbReference type="InterPro" id="IPR003593">
    <property type="entry name" value="AAA+_ATPase"/>
</dbReference>
<dbReference type="InterPro" id="IPR055190">
    <property type="entry name" value="ATP-synt_VA_C"/>
</dbReference>
<dbReference type="InterPro" id="IPR005722">
    <property type="entry name" value="ATP_synth_F1_bsu"/>
</dbReference>
<dbReference type="InterPro" id="IPR020003">
    <property type="entry name" value="ATPase_a/bsu_AS"/>
</dbReference>
<dbReference type="InterPro" id="IPR050053">
    <property type="entry name" value="ATPase_alpha/beta_chains"/>
</dbReference>
<dbReference type="InterPro" id="IPR004100">
    <property type="entry name" value="ATPase_F1/V1/A1_a/bsu_N"/>
</dbReference>
<dbReference type="InterPro" id="IPR036121">
    <property type="entry name" value="ATPase_F1/V1/A1_a/bsu_N_sf"/>
</dbReference>
<dbReference type="InterPro" id="IPR000194">
    <property type="entry name" value="ATPase_F1/V1/A1_a/bsu_nucl-bd"/>
</dbReference>
<dbReference type="InterPro" id="IPR024034">
    <property type="entry name" value="ATPase_F1/V1_b/a_C"/>
</dbReference>
<dbReference type="InterPro" id="IPR027417">
    <property type="entry name" value="P-loop_NTPase"/>
</dbReference>
<dbReference type="NCBIfam" id="TIGR01039">
    <property type="entry name" value="atpD"/>
    <property type="match status" value="1"/>
</dbReference>
<dbReference type="PANTHER" id="PTHR15184">
    <property type="entry name" value="ATP SYNTHASE"/>
    <property type="match status" value="1"/>
</dbReference>
<dbReference type="PANTHER" id="PTHR15184:SF71">
    <property type="entry name" value="ATP SYNTHASE SUBUNIT BETA, MITOCHONDRIAL"/>
    <property type="match status" value="1"/>
</dbReference>
<dbReference type="Pfam" id="PF00006">
    <property type="entry name" value="ATP-synt_ab"/>
    <property type="match status" value="1"/>
</dbReference>
<dbReference type="Pfam" id="PF02874">
    <property type="entry name" value="ATP-synt_ab_N"/>
    <property type="match status" value="1"/>
</dbReference>
<dbReference type="Pfam" id="PF22919">
    <property type="entry name" value="ATP-synt_VA_C"/>
    <property type="match status" value="1"/>
</dbReference>
<dbReference type="PIRSF" id="PIRSF039072">
    <property type="entry name" value="ATPase_subunit_beta"/>
    <property type="match status" value="1"/>
</dbReference>
<dbReference type="SMART" id="SM00382">
    <property type="entry name" value="AAA"/>
    <property type="match status" value="1"/>
</dbReference>
<dbReference type="SUPFAM" id="SSF47917">
    <property type="entry name" value="C-terminal domain of alpha and beta subunits of F1 ATP synthase"/>
    <property type="match status" value="1"/>
</dbReference>
<dbReference type="SUPFAM" id="SSF50615">
    <property type="entry name" value="N-terminal domain of alpha and beta subunits of F1 ATP synthase"/>
    <property type="match status" value="1"/>
</dbReference>
<dbReference type="SUPFAM" id="SSF52540">
    <property type="entry name" value="P-loop containing nucleoside triphosphate hydrolases"/>
    <property type="match status" value="1"/>
</dbReference>
<dbReference type="PROSITE" id="PS00152">
    <property type="entry name" value="ATPASE_ALPHA_BETA"/>
    <property type="match status" value="1"/>
</dbReference>
<evidence type="ECO:0000255" key="1">
    <source>
        <dbReference type="HAMAP-Rule" id="MF_01347"/>
    </source>
</evidence>
<evidence type="ECO:0000256" key="2">
    <source>
        <dbReference type="SAM" id="MobiDB-lite"/>
    </source>
</evidence>
<accession>Q9A2V9</accession>
<protein>
    <recommendedName>
        <fullName evidence="1">ATP synthase subunit beta</fullName>
        <ecNumber evidence="1">7.1.2.2</ecNumber>
    </recommendedName>
    <alternativeName>
        <fullName evidence="1">ATP synthase F1 sector subunit beta</fullName>
    </alternativeName>
    <alternativeName>
        <fullName evidence="1">F-ATPase subunit beta</fullName>
    </alternativeName>
</protein>
<organism>
    <name type="scientific">Caulobacter vibrioides (strain ATCC 19089 / CIP 103742 / CB 15)</name>
    <name type="common">Caulobacter crescentus</name>
    <dbReference type="NCBI Taxonomy" id="190650"/>
    <lineage>
        <taxon>Bacteria</taxon>
        <taxon>Pseudomonadati</taxon>
        <taxon>Pseudomonadota</taxon>
        <taxon>Alphaproteobacteria</taxon>
        <taxon>Caulobacterales</taxon>
        <taxon>Caulobacteraceae</taxon>
        <taxon>Caulobacter</taxon>
    </lineage>
</organism>
<name>ATPB_CAUVC</name>
<sequence>MAKTPAEKPATAAKKPAAPKAAAAPKAAAAKAPAAAKAPAAKKPAAPKAAAAPKAPAAGLEGATGRLVQIIGAVVDIEFDGALPAILNAVETVNTATGQRLVFEVAQHLGQSTVRAIAMDATEGLVRGQPVRDTGEPIRVPVGPGTLGRIMNVIGEPIDEQGPIRSDISRTIHRDAPSFAEQTNTAEVLVTGIKVIDLMCPYTKGGKIGLFGGAGVGKTVTMQELINNIAKAYGGYSVLAGVGERTREGNDLYHEMIESNVNVDPKANNGSTEGSRCALVYGQMNEPPGARARVALTGLSIAEYFRDEEGKDVLLFVDNIFRFTQAGAEVSALLGRIPSAVGYQPTLATEMGNLQERITSTNKGSITSVQAIYVPADDLTDPAPATSFAHLDATTVLSRDIAAQAIFPAVDPLDSTSRIMDPLVIGEEHYTVARRVQEVLQQYKALKDIIAILGMDELSEEDKLVVARARKIQRFLSQPFHVAEQFTNTPGAFVQLKDTIRSFKGIVDGEYDHLPEGAFYMVGPIEEAVAKAEKMAAEA</sequence>
<keyword id="KW-0066">ATP synthesis</keyword>
<keyword id="KW-0067">ATP-binding</keyword>
<keyword id="KW-0997">Cell inner membrane</keyword>
<keyword id="KW-1003">Cell membrane</keyword>
<keyword id="KW-0139">CF(1)</keyword>
<keyword id="KW-0375">Hydrogen ion transport</keyword>
<keyword id="KW-0406">Ion transport</keyword>
<keyword id="KW-0472">Membrane</keyword>
<keyword id="KW-0547">Nucleotide-binding</keyword>
<keyword id="KW-1185">Reference proteome</keyword>
<keyword id="KW-1278">Translocase</keyword>
<keyword id="KW-0813">Transport</keyword>
<gene>
    <name evidence="1" type="primary">atpD</name>
    <name type="ordered locus">CC_3447</name>
</gene>